<gene>
    <name type="primary">Ilkap</name>
</gene>
<feature type="chain" id="PRO_0000272272" description="Integrin-linked kinase-associated serine/threonine phosphatase 2C">
    <location>
        <begin position="1"/>
        <end position="392"/>
    </location>
</feature>
<feature type="domain" description="PPM-type phosphatase" evidence="3">
    <location>
        <begin position="108"/>
        <end position="390"/>
    </location>
</feature>
<feature type="region of interest" description="Disordered" evidence="4">
    <location>
        <begin position="1"/>
        <end position="91"/>
    </location>
</feature>
<feature type="compositionally biased region" description="Polar residues" evidence="4">
    <location>
        <begin position="56"/>
        <end position="70"/>
    </location>
</feature>
<feature type="compositionally biased region" description="Basic and acidic residues" evidence="4">
    <location>
        <begin position="72"/>
        <end position="91"/>
    </location>
</feature>
<feature type="binding site" evidence="1">
    <location>
        <position position="152"/>
    </location>
    <ligand>
        <name>Mn(2+)</name>
        <dbReference type="ChEBI" id="CHEBI:29035"/>
        <label>1</label>
    </ligand>
</feature>
<feature type="binding site" evidence="1">
    <location>
        <position position="152"/>
    </location>
    <ligand>
        <name>Mn(2+)</name>
        <dbReference type="ChEBI" id="CHEBI:29035"/>
        <label>2</label>
    </ligand>
</feature>
<feature type="binding site" evidence="1">
    <location>
        <position position="153"/>
    </location>
    <ligand>
        <name>Mn(2+)</name>
        <dbReference type="ChEBI" id="CHEBI:29035"/>
        <label>1</label>
    </ligand>
</feature>
<feature type="binding site" evidence="1">
    <location>
        <position position="326"/>
    </location>
    <ligand>
        <name>Mn(2+)</name>
        <dbReference type="ChEBI" id="CHEBI:29035"/>
        <label>2</label>
    </ligand>
</feature>
<feature type="binding site" evidence="1">
    <location>
        <position position="381"/>
    </location>
    <ligand>
        <name>Mn(2+)</name>
        <dbReference type="ChEBI" id="CHEBI:29035"/>
        <label>2</label>
    </ligand>
</feature>
<feature type="modified residue" description="N-acetylmethionine" evidence="2">
    <location>
        <position position="1"/>
    </location>
</feature>
<feature type="modified residue" description="N6-acetyllysine" evidence="2">
    <location>
        <position position="210"/>
    </location>
</feature>
<feature type="splice variant" id="VSP_022384" description="In isoform 2." evidence="5">
    <location>
        <begin position="1"/>
        <end position="120"/>
    </location>
</feature>
<feature type="splice variant" id="VSP_022385" description="In isoform 2." evidence="5">
    <original>DDKIQTREGKPAVDARYEAACNRLANKAVQRGSADNVTVMVVRIGH</original>
    <variation>VPRQLHSSRSCFPEVSPERMTVVLAYTQLSISGVLGSLPEWMV</variation>
    <location>
        <begin position="347"/>
        <end position="392"/>
    </location>
</feature>
<comment type="function">
    <text evidence="1">Protein phosphatase that may play a role in regulation of cell cycle progression via dephosphorylation of its substrates whose appropriate phosphorylation states might be crucial for cell proliferation. Selectively associates with integrin linked kinase (ILK), to modulate cell adhesion and growth factor signaling. Inhibits the ILK-GSK3B signaling axis and may play an important role in inhibiting oncogenic transformation (By similarity).</text>
</comment>
<comment type="catalytic activity">
    <reaction>
        <text>O-phospho-L-seryl-[protein] + H2O = L-seryl-[protein] + phosphate</text>
        <dbReference type="Rhea" id="RHEA:20629"/>
        <dbReference type="Rhea" id="RHEA-COMP:9863"/>
        <dbReference type="Rhea" id="RHEA-COMP:11604"/>
        <dbReference type="ChEBI" id="CHEBI:15377"/>
        <dbReference type="ChEBI" id="CHEBI:29999"/>
        <dbReference type="ChEBI" id="CHEBI:43474"/>
        <dbReference type="ChEBI" id="CHEBI:83421"/>
        <dbReference type="EC" id="3.1.3.16"/>
    </reaction>
</comment>
<comment type="catalytic activity">
    <reaction>
        <text>O-phospho-L-threonyl-[protein] + H2O = L-threonyl-[protein] + phosphate</text>
        <dbReference type="Rhea" id="RHEA:47004"/>
        <dbReference type="Rhea" id="RHEA-COMP:11060"/>
        <dbReference type="Rhea" id="RHEA-COMP:11605"/>
        <dbReference type="ChEBI" id="CHEBI:15377"/>
        <dbReference type="ChEBI" id="CHEBI:30013"/>
        <dbReference type="ChEBI" id="CHEBI:43474"/>
        <dbReference type="ChEBI" id="CHEBI:61977"/>
        <dbReference type="EC" id="3.1.3.16"/>
    </reaction>
</comment>
<comment type="cofactor">
    <cofactor evidence="1">
        <name>Mg(2+)</name>
        <dbReference type="ChEBI" id="CHEBI:18420"/>
    </cofactor>
    <cofactor evidence="1">
        <name>Mn(2+)</name>
        <dbReference type="ChEBI" id="CHEBI:29035"/>
    </cofactor>
    <text evidence="1">Binds 2 magnesium or manganese ions per subunit.</text>
</comment>
<comment type="subunit">
    <text evidence="1">Interacts with ILK.</text>
</comment>
<comment type="subcellular location">
    <subcellularLocation>
        <location evidence="1">Cytoplasm</location>
    </subcellularLocation>
</comment>
<comment type="alternative products">
    <event type="alternative splicing"/>
    <isoform>
        <id>Q8R0F6-1</id>
        <name>1</name>
        <sequence type="displayed"/>
    </isoform>
    <isoform>
        <id>Q8R0F6-2</id>
        <name>2</name>
        <sequence type="described" ref="VSP_022384 VSP_022385"/>
    </isoform>
</comment>
<comment type="similarity">
    <text evidence="6">Belongs to the PP2C family.</text>
</comment>
<reference key="1">
    <citation type="journal article" date="2004" name="Genome Res.">
        <title>The status, quality, and expansion of the NIH full-length cDNA project: the Mammalian Gene Collection (MGC).</title>
        <authorList>
            <consortium name="The MGC Project Team"/>
        </authorList>
    </citation>
    <scope>NUCLEOTIDE SEQUENCE [LARGE SCALE MRNA] (ISOFORMS 1 AND 2)</scope>
    <source>
        <strain>FVB/N</strain>
        <tissue>Liver</tissue>
    </source>
</reference>
<reference key="2">
    <citation type="journal article" date="2010" name="Cell">
        <title>A tissue-specific atlas of mouse protein phosphorylation and expression.</title>
        <authorList>
            <person name="Huttlin E.L."/>
            <person name="Jedrychowski M.P."/>
            <person name="Elias J.E."/>
            <person name="Goswami T."/>
            <person name="Rad R."/>
            <person name="Beausoleil S.A."/>
            <person name="Villen J."/>
            <person name="Haas W."/>
            <person name="Sowa M.E."/>
            <person name="Gygi S.P."/>
        </authorList>
    </citation>
    <scope>IDENTIFICATION BY MASS SPECTROMETRY [LARGE SCALE ANALYSIS]</scope>
    <source>
        <tissue>Spleen</tissue>
        <tissue>Testis</tissue>
    </source>
</reference>
<proteinExistence type="evidence at protein level"/>
<name>ILKAP_MOUSE</name>
<dbReference type="EC" id="3.1.3.16"/>
<dbReference type="EMBL" id="BC026953">
    <property type="protein sequence ID" value="AAH26953.1"/>
    <property type="molecule type" value="mRNA"/>
</dbReference>
<dbReference type="EMBL" id="BC027439">
    <property type="protein sequence ID" value="AAH27439.1"/>
    <property type="molecule type" value="mRNA"/>
</dbReference>
<dbReference type="CCDS" id="CCDS15162.1">
    <molecule id="Q8R0F6-1"/>
</dbReference>
<dbReference type="RefSeq" id="NP_001342081.1">
    <molecule id="Q8R0F6-2"/>
    <property type="nucleotide sequence ID" value="NM_001355152.1"/>
</dbReference>
<dbReference type="RefSeq" id="NP_075832.1">
    <molecule id="Q8R0F6-1"/>
    <property type="nucleotide sequence ID" value="NM_023343.3"/>
</dbReference>
<dbReference type="RefSeq" id="XP_006529879.1">
    <property type="nucleotide sequence ID" value="XM_006529816.3"/>
</dbReference>
<dbReference type="RefSeq" id="XP_030098273.1">
    <molecule id="Q8R0F6-2"/>
    <property type="nucleotide sequence ID" value="XM_030242413.2"/>
</dbReference>
<dbReference type="SMR" id="Q8R0F6"/>
<dbReference type="BioGRID" id="212191">
    <property type="interactions" value="4"/>
</dbReference>
<dbReference type="FunCoup" id="Q8R0F6">
    <property type="interactions" value="3259"/>
</dbReference>
<dbReference type="STRING" id="10090.ENSMUSP00000027534"/>
<dbReference type="iPTMnet" id="Q8R0F6"/>
<dbReference type="PhosphoSitePlus" id="Q8R0F6"/>
<dbReference type="SwissPalm" id="Q8R0F6"/>
<dbReference type="PaxDb" id="10090-ENSMUSP00000027534"/>
<dbReference type="PeptideAtlas" id="Q8R0F6"/>
<dbReference type="ProteomicsDB" id="269400">
    <molecule id="Q8R0F6-1"/>
</dbReference>
<dbReference type="ProteomicsDB" id="269401">
    <molecule id="Q8R0F6-2"/>
</dbReference>
<dbReference type="Pumba" id="Q8R0F6"/>
<dbReference type="Antibodypedia" id="1494">
    <property type="antibodies" value="300 antibodies from 32 providers"/>
</dbReference>
<dbReference type="DNASU" id="67444"/>
<dbReference type="Ensembl" id="ENSMUST00000027534.13">
    <molecule id="Q8R0F6-1"/>
    <property type="protein sequence ID" value="ENSMUSP00000027534.7"/>
    <property type="gene ID" value="ENSMUSG00000026309.15"/>
</dbReference>
<dbReference type="GeneID" id="67444"/>
<dbReference type="KEGG" id="mmu:67444"/>
<dbReference type="UCSC" id="uc007cak.1">
    <molecule id="Q8R0F6-2"/>
    <property type="organism name" value="mouse"/>
</dbReference>
<dbReference type="UCSC" id="uc007cal.1">
    <molecule id="Q8R0F6-1"/>
    <property type="organism name" value="mouse"/>
</dbReference>
<dbReference type="AGR" id="MGI:1914694"/>
<dbReference type="CTD" id="80895"/>
<dbReference type="MGI" id="MGI:1914694">
    <property type="gene designation" value="Ilkap"/>
</dbReference>
<dbReference type="VEuPathDB" id="HostDB:ENSMUSG00000026309"/>
<dbReference type="eggNOG" id="KOG0698">
    <property type="taxonomic scope" value="Eukaryota"/>
</dbReference>
<dbReference type="GeneTree" id="ENSGT00940000157403"/>
<dbReference type="HOGENOM" id="CLU_013173_1_6_1"/>
<dbReference type="InParanoid" id="Q8R0F6"/>
<dbReference type="OMA" id="NFSCFCL"/>
<dbReference type="OrthoDB" id="10264738at2759"/>
<dbReference type="PhylomeDB" id="Q8R0F6"/>
<dbReference type="TreeFam" id="TF313513"/>
<dbReference type="BioGRID-ORCS" id="67444">
    <property type="hits" value="1 hit in 79 CRISPR screens"/>
</dbReference>
<dbReference type="ChiTaRS" id="Ilkap">
    <property type="organism name" value="mouse"/>
</dbReference>
<dbReference type="PRO" id="PR:Q8R0F6"/>
<dbReference type="Proteomes" id="UP000000589">
    <property type="component" value="Chromosome 1"/>
</dbReference>
<dbReference type="RNAct" id="Q8R0F6">
    <property type="molecule type" value="protein"/>
</dbReference>
<dbReference type="Bgee" id="ENSMUSG00000026309">
    <property type="expression patterns" value="Expressed in retinal neural layer and 267 other cell types or tissues"/>
</dbReference>
<dbReference type="ExpressionAtlas" id="Q8R0F6">
    <property type="expression patterns" value="baseline and differential"/>
</dbReference>
<dbReference type="GO" id="GO:0005737">
    <property type="term" value="C:cytoplasm"/>
    <property type="evidence" value="ECO:0007669"/>
    <property type="project" value="UniProtKB-SubCell"/>
</dbReference>
<dbReference type="GO" id="GO:0046872">
    <property type="term" value="F:metal ion binding"/>
    <property type="evidence" value="ECO:0007669"/>
    <property type="project" value="UniProtKB-KW"/>
</dbReference>
<dbReference type="GO" id="GO:0004722">
    <property type="term" value="F:protein serine/threonine phosphatase activity"/>
    <property type="evidence" value="ECO:0007669"/>
    <property type="project" value="UniProtKB-EC"/>
</dbReference>
<dbReference type="CDD" id="cd00143">
    <property type="entry name" value="PP2Cc"/>
    <property type="match status" value="1"/>
</dbReference>
<dbReference type="FunFam" id="3.60.40.10:FF:000018">
    <property type="entry name" value="Integrin-linked kinase-associated serine/threonine phosphatase 2C"/>
    <property type="match status" value="1"/>
</dbReference>
<dbReference type="Gene3D" id="3.60.40.10">
    <property type="entry name" value="PPM-type phosphatase domain"/>
    <property type="match status" value="1"/>
</dbReference>
<dbReference type="InterPro" id="IPR015655">
    <property type="entry name" value="PP2C"/>
</dbReference>
<dbReference type="InterPro" id="IPR000222">
    <property type="entry name" value="PP2C_BS"/>
</dbReference>
<dbReference type="InterPro" id="IPR036457">
    <property type="entry name" value="PPM-type-like_dom_sf"/>
</dbReference>
<dbReference type="InterPro" id="IPR001932">
    <property type="entry name" value="PPM-type_phosphatase-like_dom"/>
</dbReference>
<dbReference type="PANTHER" id="PTHR47992">
    <property type="entry name" value="PROTEIN PHOSPHATASE"/>
    <property type="match status" value="1"/>
</dbReference>
<dbReference type="Pfam" id="PF00481">
    <property type="entry name" value="PP2C"/>
    <property type="match status" value="1"/>
</dbReference>
<dbReference type="SMART" id="SM00332">
    <property type="entry name" value="PP2Cc"/>
    <property type="match status" value="1"/>
</dbReference>
<dbReference type="SUPFAM" id="SSF81606">
    <property type="entry name" value="PP2C-like"/>
    <property type="match status" value="1"/>
</dbReference>
<dbReference type="PROSITE" id="PS01032">
    <property type="entry name" value="PPM_1"/>
    <property type="match status" value="1"/>
</dbReference>
<dbReference type="PROSITE" id="PS51746">
    <property type="entry name" value="PPM_2"/>
    <property type="match status" value="1"/>
</dbReference>
<protein>
    <recommendedName>
        <fullName>Integrin-linked kinase-associated serine/threonine phosphatase 2C</fullName>
        <shortName>ILKAP</shortName>
        <ecNumber>3.1.3.16</ecNumber>
    </recommendedName>
</protein>
<sequence>MDLFGDLPEPERAPRPSAGKEAQGRPVLFEDLPPASSTDSGSGGPLLFDDLPPAASGNSGSLATSGSQVVKTEGKGAKRKAPEEEKNGGEELVEKKVCKASSVIFGLKGYVAERKGEREEMQDAHVILNDITQECNPPSSLITRVSYFAVFDGHGGIRASKFAAQNLHQNLIRKFPKGDIISVEKTVKRCLLDTFKHTDEEFLKQASSQKPAWKDGSTATCVLAVDNILYIANLGDSRAILCRYNEESQKHAALSLSKEHNPTQYEERMRIQKAGGNVRDGRVLGVLEVSRSIGDGQYKRCGVTSVPDIRRCQLTPNDRFILLACDGLFKVFTPEEAVNFILSCLEDDKIQTREGKPAVDARYEAACNRLANKAVQRGSADNVTVMVVRIGH</sequence>
<accession>Q8R0F6</accession>
<accession>Q05CC3</accession>
<evidence type="ECO:0000250" key="1"/>
<evidence type="ECO:0000250" key="2">
    <source>
        <dbReference type="UniProtKB" id="Q9H0C8"/>
    </source>
</evidence>
<evidence type="ECO:0000255" key="3">
    <source>
        <dbReference type="PROSITE-ProRule" id="PRU01082"/>
    </source>
</evidence>
<evidence type="ECO:0000256" key="4">
    <source>
        <dbReference type="SAM" id="MobiDB-lite"/>
    </source>
</evidence>
<evidence type="ECO:0000303" key="5">
    <source>
    </source>
</evidence>
<evidence type="ECO:0000305" key="6"/>
<keyword id="KW-0007">Acetylation</keyword>
<keyword id="KW-0025">Alternative splicing</keyword>
<keyword id="KW-0963">Cytoplasm</keyword>
<keyword id="KW-0378">Hydrolase</keyword>
<keyword id="KW-0460">Magnesium</keyword>
<keyword id="KW-0464">Manganese</keyword>
<keyword id="KW-0479">Metal-binding</keyword>
<keyword id="KW-0904">Protein phosphatase</keyword>
<keyword id="KW-1185">Reference proteome</keyword>
<organism>
    <name type="scientific">Mus musculus</name>
    <name type="common">Mouse</name>
    <dbReference type="NCBI Taxonomy" id="10090"/>
    <lineage>
        <taxon>Eukaryota</taxon>
        <taxon>Metazoa</taxon>
        <taxon>Chordata</taxon>
        <taxon>Craniata</taxon>
        <taxon>Vertebrata</taxon>
        <taxon>Euteleostomi</taxon>
        <taxon>Mammalia</taxon>
        <taxon>Eutheria</taxon>
        <taxon>Euarchontoglires</taxon>
        <taxon>Glires</taxon>
        <taxon>Rodentia</taxon>
        <taxon>Myomorpha</taxon>
        <taxon>Muroidea</taxon>
        <taxon>Muridae</taxon>
        <taxon>Murinae</taxon>
        <taxon>Mus</taxon>
        <taxon>Mus</taxon>
    </lineage>
</organism>